<accession>B1LWL6</accession>
<protein>
    <recommendedName>
        <fullName evidence="1">Sugar fermentation stimulation protein homolog</fullName>
    </recommendedName>
</protein>
<evidence type="ECO:0000255" key="1">
    <source>
        <dbReference type="HAMAP-Rule" id="MF_00095"/>
    </source>
</evidence>
<sequence length="237" mass="25357">MQFAAPLVPGRLVQRYKRFLADIDTDDGRVTVHCPNPGAMLGLNAPGARVLLSRSSNPARKLPLTWELVEAELPGGAQWVGINTQRPNALVAEAFRAGAIAALAGHDALRPEVRYAEASRVDFLASGAEAGPCHVEVKNCHLMRRAGLAEFPDCKAARSARHMRDLAQVVADGGRALVVIVVQMRAEAFDVARDIDPAFDRAFREARAAGVAVRAYRCAVGPEGVAIAEEIPVITPP</sequence>
<gene>
    <name evidence="1" type="primary">sfsA</name>
    <name type="ordered locus">Mrad2831_0707</name>
</gene>
<comment type="similarity">
    <text evidence="1">Belongs to the SfsA family.</text>
</comment>
<proteinExistence type="inferred from homology"/>
<feature type="chain" id="PRO_1000093578" description="Sugar fermentation stimulation protein homolog">
    <location>
        <begin position="1"/>
        <end position="237"/>
    </location>
</feature>
<reference key="1">
    <citation type="submission" date="2008-03" db="EMBL/GenBank/DDBJ databases">
        <title>Complete sequence of chromosome of Methylobacterium radiotolerans JCM 2831.</title>
        <authorList>
            <consortium name="US DOE Joint Genome Institute"/>
            <person name="Copeland A."/>
            <person name="Lucas S."/>
            <person name="Lapidus A."/>
            <person name="Glavina del Rio T."/>
            <person name="Dalin E."/>
            <person name="Tice H."/>
            <person name="Bruce D."/>
            <person name="Goodwin L."/>
            <person name="Pitluck S."/>
            <person name="Kiss H."/>
            <person name="Brettin T."/>
            <person name="Detter J.C."/>
            <person name="Han C."/>
            <person name="Kuske C.R."/>
            <person name="Schmutz J."/>
            <person name="Larimer F."/>
            <person name="Land M."/>
            <person name="Hauser L."/>
            <person name="Kyrpides N."/>
            <person name="Mikhailova N."/>
            <person name="Marx C.J."/>
            <person name="Richardson P."/>
        </authorList>
    </citation>
    <scope>NUCLEOTIDE SEQUENCE [LARGE SCALE GENOMIC DNA]</scope>
    <source>
        <strain>ATCC 27329 / DSM 1819 / JCM 2831 / NBRC 15690 / NCIMB 10815 / 0-1</strain>
    </source>
</reference>
<name>SFSA_METRJ</name>
<organism>
    <name type="scientific">Methylobacterium radiotolerans (strain ATCC 27329 / DSM 1819 / JCM 2831 / NBRC 15690 / NCIMB 10815 / 0-1)</name>
    <dbReference type="NCBI Taxonomy" id="426355"/>
    <lineage>
        <taxon>Bacteria</taxon>
        <taxon>Pseudomonadati</taxon>
        <taxon>Pseudomonadota</taxon>
        <taxon>Alphaproteobacteria</taxon>
        <taxon>Hyphomicrobiales</taxon>
        <taxon>Methylobacteriaceae</taxon>
        <taxon>Methylobacterium</taxon>
    </lineage>
</organism>
<dbReference type="EMBL" id="CP001001">
    <property type="protein sequence ID" value="ACB22718.1"/>
    <property type="molecule type" value="Genomic_DNA"/>
</dbReference>
<dbReference type="RefSeq" id="WP_012317712.1">
    <property type="nucleotide sequence ID" value="NC_010505.1"/>
</dbReference>
<dbReference type="SMR" id="B1LWL6"/>
<dbReference type="STRING" id="426355.Mrad2831_0707"/>
<dbReference type="GeneID" id="6136722"/>
<dbReference type="KEGG" id="mrd:Mrad2831_0707"/>
<dbReference type="eggNOG" id="COG1489">
    <property type="taxonomic scope" value="Bacteria"/>
</dbReference>
<dbReference type="HOGENOM" id="CLU_052299_2_0_5"/>
<dbReference type="OrthoDB" id="9802365at2"/>
<dbReference type="Proteomes" id="UP000006589">
    <property type="component" value="Chromosome"/>
</dbReference>
<dbReference type="GO" id="GO:0003677">
    <property type="term" value="F:DNA binding"/>
    <property type="evidence" value="ECO:0007669"/>
    <property type="project" value="InterPro"/>
</dbReference>
<dbReference type="CDD" id="cd22359">
    <property type="entry name" value="SfsA-like_bacterial"/>
    <property type="match status" value="1"/>
</dbReference>
<dbReference type="Gene3D" id="2.40.50.580">
    <property type="match status" value="1"/>
</dbReference>
<dbReference type="Gene3D" id="3.40.1350.60">
    <property type="match status" value="1"/>
</dbReference>
<dbReference type="HAMAP" id="MF_00095">
    <property type="entry name" value="SfsA"/>
    <property type="match status" value="1"/>
</dbReference>
<dbReference type="InterPro" id="IPR005224">
    <property type="entry name" value="SfsA"/>
</dbReference>
<dbReference type="InterPro" id="IPR040452">
    <property type="entry name" value="SfsA_C"/>
</dbReference>
<dbReference type="InterPro" id="IPR041465">
    <property type="entry name" value="SfsA_N"/>
</dbReference>
<dbReference type="NCBIfam" id="TIGR00230">
    <property type="entry name" value="sfsA"/>
    <property type="match status" value="1"/>
</dbReference>
<dbReference type="PANTHER" id="PTHR30545">
    <property type="entry name" value="SUGAR FERMENTATION STIMULATION PROTEIN A"/>
    <property type="match status" value="1"/>
</dbReference>
<dbReference type="PANTHER" id="PTHR30545:SF2">
    <property type="entry name" value="SUGAR FERMENTATION STIMULATION PROTEIN A"/>
    <property type="match status" value="1"/>
</dbReference>
<dbReference type="Pfam" id="PF03749">
    <property type="entry name" value="SfsA"/>
    <property type="match status" value="1"/>
</dbReference>
<dbReference type="Pfam" id="PF17746">
    <property type="entry name" value="SfsA_N"/>
    <property type="match status" value="1"/>
</dbReference>